<proteinExistence type="evidence at protein level"/>
<reference key="1">
    <citation type="journal article" date="2016" name="MBio">
        <title>Nascent genomic evolution and allopatric speciation of Myroides profundi D25 in its transition from land to ocean.</title>
        <authorList>
            <person name="Zhang Y.Z."/>
            <person name="Li Y."/>
            <person name="Xie B.B."/>
            <person name="Chen X.L."/>
            <person name="Yao Q.Q."/>
            <person name="Zhang X.Y."/>
            <person name="Kempher M.L."/>
            <person name="Zhou J."/>
            <person name="Oren A."/>
            <person name="Qin Q.L."/>
        </authorList>
    </citation>
    <scope>NUCLEOTIDE SEQUENCE [LARGE SCALE GENOMIC DNA]</scope>
    <source>
        <strain>DSM 19823 / KCTC 23066 / CCTCC M 208030 / D25</strain>
    </source>
</reference>
<reference evidence="5" key="2">
    <citation type="journal article" date="2021" name="Sci. Adv.">
        <title>Oxidation of trimethylamine to trimethylamine N-oxide facilitates high hydrostatic pressure tolerance in a generalist bacterial lineage.</title>
        <authorList>
            <person name="Qin Q.L."/>
            <person name="Wang Z.B."/>
            <person name="Su H.N."/>
            <person name="Chen X.L."/>
            <person name="Miao J."/>
            <person name="Wang X.J."/>
            <person name="Li C.Y."/>
            <person name="Zhang X.Y."/>
            <person name="Li P.Y."/>
            <person name="Wang M."/>
            <person name="Fang J."/>
            <person name="Lidbury I."/>
            <person name="Zhang W."/>
            <person name="Zhang X.H."/>
            <person name="Yang G.P."/>
            <person name="Chen Y."/>
            <person name="Zhang Y.Z."/>
        </authorList>
    </citation>
    <scope>X-RAY CRYSTALLOGRAPHY (1.69 ANGSTROMS) IN COMPLEX WITH FAD AND NADP(+)</scope>
    <scope>FUNCTION</scope>
    <scope>CATALYTIC ACTIVITY</scope>
    <scope>COFACTOR</scope>
    <scope>BIOPHYSICOCHEMICAL PROPERTIES</scope>
    <scope>INDUCTION</scope>
    <source>
        <strain>DSM 19823 / KCTC 23066 / CCTCC M 208030 / D25</strain>
    </source>
</reference>
<accession>A0A0B5RNJ4</accession>
<organism>
    <name type="scientific">Myroides profundi</name>
    <dbReference type="NCBI Taxonomy" id="480520"/>
    <lineage>
        <taxon>Bacteria</taxon>
        <taxon>Pseudomonadati</taxon>
        <taxon>Bacteroidota</taxon>
        <taxon>Flavobacteriia</taxon>
        <taxon>Flavobacteriales</taxon>
        <taxon>Flavobacteriaceae</taxon>
        <taxon>Myroides</taxon>
    </lineage>
</organism>
<name>TMM_MYRPR</name>
<sequence>MLNLKVGIIGAGPSGLAMLRAFESEQKKGNPIPEIKCYEKQDNWGGMWNYTWRTGVGKYGEPIHGSMYKYLWSNGPKECLEFSDYTFMEHFKQPISSYPPREVLFDYIQGRIKQSNARDFIKFNTVARWVDYLEDKKQFRVIFDDLVKNETFEEYFDYLVVGTGHFSTPNMPYFKGIDSFPGTVMHAHDFRGADQFIDKDILLIGSSYSAEDIGVQCFKHGSKSVTISYRTNPIGAKWPKGIEEKPIVTHFEDNVAHFKDGSKKEYDAVILCTGYQHKFPFLPDNLRLKTKNNLYPDNLYKGVVFNENERLIFLGMQDQYYTFNMFDTQAWFARDYMLGRIALPNKEIRDKDIAKWVELEKTSVTGEEHVDFQTDYIKELIEMTDYPTFDLDRVAEMFKSWLNDKETNILNYRDKVYTSVMTGVTAEEHHTPWMKELDDSLERYLDEVEVDELELSKENYY</sequence>
<feature type="chain" id="PRO_0000458076" description="Trimethylamine monooxygenase">
    <location>
        <begin position="1"/>
        <end position="461"/>
    </location>
</feature>
<feature type="binding site" evidence="1 5">
    <location>
        <position position="14"/>
    </location>
    <ligand>
        <name>FAD</name>
        <dbReference type="ChEBI" id="CHEBI:57692"/>
    </ligand>
</feature>
<feature type="binding site" evidence="1 5">
    <location>
        <position position="39"/>
    </location>
    <ligand>
        <name>FAD</name>
        <dbReference type="ChEBI" id="CHEBI:57692"/>
    </ligand>
</feature>
<feature type="binding site" evidence="1 5">
    <location>
        <position position="40"/>
    </location>
    <ligand>
        <name>FAD</name>
        <dbReference type="ChEBI" id="CHEBI:57692"/>
    </ligand>
</feature>
<feature type="binding site" evidence="1 5">
    <location>
        <position position="41"/>
    </location>
    <ligand>
        <name>FAD</name>
        <dbReference type="ChEBI" id="CHEBI:57692"/>
    </ligand>
</feature>
<feature type="binding site" evidence="1 5">
    <location>
        <position position="47"/>
    </location>
    <ligand>
        <name>FAD</name>
        <dbReference type="ChEBI" id="CHEBI:57692"/>
    </ligand>
</feature>
<feature type="binding site" evidence="1 5">
    <location>
        <position position="48"/>
    </location>
    <ligand>
        <name>FAD</name>
        <dbReference type="ChEBI" id="CHEBI:57692"/>
    </ligand>
</feature>
<feature type="binding site" evidence="1 5">
    <location>
        <position position="64"/>
    </location>
    <ligand>
        <name>FAD</name>
        <dbReference type="ChEBI" id="CHEBI:57692"/>
    </ligand>
</feature>
<feature type="binding site" evidence="1 5">
    <location>
        <position position="72"/>
    </location>
    <ligand>
        <name>NADP(+)</name>
        <dbReference type="ChEBI" id="CHEBI:58349"/>
    </ligand>
</feature>
<feature type="binding site" evidence="1 5">
    <location>
        <position position="74"/>
    </location>
    <ligand>
        <name>FAD</name>
        <dbReference type="ChEBI" id="CHEBI:57692"/>
    </ligand>
</feature>
<feature type="binding site" evidence="1 5">
    <location>
        <position position="74"/>
    </location>
    <ligand>
        <name>NADP(+)</name>
        <dbReference type="ChEBI" id="CHEBI:58349"/>
    </ligand>
</feature>
<feature type="binding site" evidence="1 5">
    <location>
        <position position="127"/>
    </location>
    <ligand>
        <name>FAD</name>
        <dbReference type="ChEBI" id="CHEBI:57692"/>
    </ligand>
</feature>
<feature type="binding site" evidence="1 5">
    <location>
        <position position="206"/>
    </location>
    <ligand>
        <name>NADP(+)</name>
        <dbReference type="ChEBI" id="CHEBI:58349"/>
    </ligand>
</feature>
<feature type="binding site" evidence="1 5">
    <location>
        <position position="207"/>
    </location>
    <ligand>
        <name>NADP(+)</name>
        <dbReference type="ChEBI" id="CHEBI:58349"/>
    </ligand>
</feature>
<feature type="binding site" evidence="1 5">
    <location>
        <position position="209"/>
    </location>
    <ligand>
        <name>NADP(+)</name>
        <dbReference type="ChEBI" id="CHEBI:58349"/>
    </ligand>
</feature>
<feature type="binding site" evidence="1 5">
    <location>
        <position position="230"/>
    </location>
    <ligand>
        <name>NADP(+)</name>
        <dbReference type="ChEBI" id="CHEBI:58349"/>
    </ligand>
</feature>
<feature type="binding site" evidence="1 5">
    <location>
        <position position="231"/>
    </location>
    <ligand>
        <name>NADP(+)</name>
        <dbReference type="ChEBI" id="CHEBI:58349"/>
    </ligand>
</feature>
<feature type="binding site" evidence="1 5">
    <location>
        <position position="319"/>
    </location>
    <ligand>
        <name>FAD</name>
        <dbReference type="ChEBI" id="CHEBI:57692"/>
    </ligand>
</feature>
<feature type="binding site" evidence="1 5">
    <location>
        <position position="322"/>
    </location>
    <ligand>
        <name>FAD</name>
        <dbReference type="ChEBI" id="CHEBI:57692"/>
    </ligand>
</feature>
<feature type="binding site" evidence="1 5">
    <location>
        <position position="413"/>
    </location>
    <ligand>
        <name>NADP(+)</name>
        <dbReference type="ChEBI" id="CHEBI:58349"/>
    </ligand>
</feature>
<feature type="strand" evidence="6">
    <location>
        <begin position="5"/>
        <end position="9"/>
    </location>
</feature>
<feature type="helix" evidence="6">
    <location>
        <begin position="13"/>
        <end position="26"/>
    </location>
</feature>
<feature type="turn" evidence="6">
    <location>
        <begin position="27"/>
        <end position="29"/>
    </location>
</feature>
<feature type="strand" evidence="6">
    <location>
        <begin position="34"/>
        <end position="38"/>
    </location>
</feature>
<feature type="strand" evidence="6">
    <location>
        <begin position="40"/>
        <end position="44"/>
    </location>
</feature>
<feature type="helix" evidence="6">
    <location>
        <begin position="46"/>
        <end position="48"/>
    </location>
</feature>
<feature type="strand" evidence="6">
    <location>
        <begin position="60"/>
        <end position="62"/>
    </location>
</feature>
<feature type="helix" evidence="6">
    <location>
        <begin position="77"/>
        <end position="79"/>
    </location>
</feature>
<feature type="helix" evidence="6">
    <location>
        <begin position="87"/>
        <end position="91"/>
    </location>
</feature>
<feature type="helix" evidence="6">
    <location>
        <begin position="101"/>
        <end position="112"/>
    </location>
</feature>
<feature type="turn" evidence="6">
    <location>
        <begin position="113"/>
        <end position="116"/>
    </location>
</feature>
<feature type="helix" evidence="6">
    <location>
        <begin position="117"/>
        <end position="120"/>
    </location>
</feature>
<feature type="strand" evidence="6">
    <location>
        <begin position="124"/>
        <end position="133"/>
    </location>
</feature>
<feature type="turn" evidence="6">
    <location>
        <begin position="134"/>
        <end position="137"/>
    </location>
</feature>
<feature type="strand" evidence="6">
    <location>
        <begin position="138"/>
        <end position="145"/>
    </location>
</feature>
<feature type="turn" evidence="6">
    <location>
        <begin position="146"/>
        <end position="149"/>
    </location>
</feature>
<feature type="strand" evidence="6">
    <location>
        <begin position="150"/>
        <end position="161"/>
    </location>
</feature>
<feature type="strand" evidence="6">
    <location>
        <begin position="165"/>
        <end position="169"/>
    </location>
</feature>
<feature type="helix" evidence="6">
    <location>
        <begin position="177"/>
        <end position="179"/>
    </location>
</feature>
<feature type="strand" evidence="6">
    <location>
        <begin position="182"/>
        <end position="186"/>
    </location>
</feature>
<feature type="helix" evidence="6">
    <location>
        <begin position="187"/>
        <end position="189"/>
    </location>
</feature>
<feature type="helix" evidence="6">
    <location>
        <begin position="193"/>
        <end position="196"/>
    </location>
</feature>
<feature type="strand" evidence="6">
    <location>
        <begin position="200"/>
        <end position="204"/>
    </location>
</feature>
<feature type="helix" evidence="6">
    <location>
        <begin position="208"/>
        <end position="220"/>
    </location>
</feature>
<feature type="strand" evidence="6">
    <location>
        <begin position="223"/>
        <end position="228"/>
    </location>
</feature>
<feature type="strand" evidence="6">
    <location>
        <begin position="242"/>
        <end position="245"/>
    </location>
</feature>
<feature type="strand" evidence="6">
    <location>
        <begin position="248"/>
        <end position="252"/>
    </location>
</feature>
<feature type="strand" evidence="6">
    <location>
        <begin position="255"/>
        <end position="258"/>
    </location>
</feature>
<feature type="strand" evidence="6">
    <location>
        <begin position="263"/>
        <end position="265"/>
    </location>
</feature>
<feature type="strand" evidence="6">
    <location>
        <begin position="267"/>
        <end position="271"/>
    </location>
</feature>
<feature type="helix" evidence="6">
    <location>
        <begin position="284"/>
        <end position="286"/>
    </location>
</feature>
<feature type="turn" evidence="6">
    <location>
        <begin position="301"/>
        <end position="303"/>
    </location>
</feature>
<feature type="strand" evidence="6">
    <location>
        <begin position="311"/>
        <end position="313"/>
    </location>
</feature>
<feature type="helix" evidence="6">
    <location>
        <begin position="323"/>
        <end position="337"/>
    </location>
</feature>
<feature type="helix" evidence="6">
    <location>
        <begin position="346"/>
        <end position="362"/>
    </location>
</feature>
<feature type="helix" evidence="6">
    <location>
        <begin position="366"/>
        <end position="381"/>
    </location>
</feature>
<feature type="strand" evidence="6">
    <location>
        <begin position="384"/>
        <end position="386"/>
    </location>
</feature>
<feature type="helix" evidence="6">
    <location>
        <begin position="391"/>
        <end position="407"/>
    </location>
</feature>
<feature type="turn" evidence="6">
    <location>
        <begin position="409"/>
        <end position="411"/>
    </location>
</feature>
<feature type="helix" evidence="6">
    <location>
        <begin position="412"/>
        <end position="414"/>
    </location>
</feature>
<feature type="turn" evidence="6">
    <location>
        <begin position="420"/>
        <end position="422"/>
    </location>
</feature>
<feature type="helix" evidence="6">
    <location>
        <begin position="433"/>
        <end position="435"/>
    </location>
</feature>
<feature type="helix" evidence="6">
    <location>
        <begin position="441"/>
        <end position="445"/>
    </location>
</feature>
<keyword id="KW-0002">3D-structure</keyword>
<keyword id="KW-0274">FAD</keyword>
<keyword id="KW-0285">Flavoprotein</keyword>
<keyword id="KW-0503">Monooxygenase</keyword>
<keyword id="KW-0521">NADP</keyword>
<keyword id="KW-0560">Oxidoreductase</keyword>
<protein>
    <recommendedName>
        <fullName evidence="3">Trimethylamine monooxygenase</fullName>
        <shortName evidence="2">TMA monooxygenase</shortName>
        <shortName evidence="2">Tmm</shortName>
        <ecNumber evidence="1">1.14.13.148</ecNumber>
    </recommendedName>
</protein>
<gene>
    <name evidence="2" type="primary">Mptmm</name>
    <name evidence="4" type="ORF">MPR_3295</name>
</gene>
<dbReference type="EC" id="1.14.13.148" evidence="1"/>
<dbReference type="EMBL" id="CP010817">
    <property type="protein sequence ID" value="AJH16415.1"/>
    <property type="molecule type" value="Genomic_DNA"/>
</dbReference>
<dbReference type="RefSeq" id="WP_041894366.1">
    <property type="nucleotide sequence ID" value="NZ_CP010817.1"/>
</dbReference>
<dbReference type="PDB" id="6KBW">
    <property type="method" value="X-ray"/>
    <property type="resolution" value="1.69 A"/>
    <property type="chains" value="A/B=1-461"/>
</dbReference>
<dbReference type="PDBsum" id="6KBW"/>
<dbReference type="SMR" id="A0A0B5RNJ4"/>
<dbReference type="KEGG" id="mpw:MPR_3295"/>
<dbReference type="HOGENOM" id="CLU_006909_3_0_10"/>
<dbReference type="BioCyc" id="MetaCyc:MONOMER-21747"/>
<dbReference type="GO" id="GO:0050660">
    <property type="term" value="F:flavin adenine dinucleotide binding"/>
    <property type="evidence" value="ECO:0007669"/>
    <property type="project" value="InterPro"/>
</dbReference>
<dbReference type="GO" id="GO:0004499">
    <property type="term" value="F:N,N-dimethylaniline monooxygenase activity"/>
    <property type="evidence" value="ECO:0007669"/>
    <property type="project" value="InterPro"/>
</dbReference>
<dbReference type="GO" id="GO:0050661">
    <property type="term" value="F:NADP binding"/>
    <property type="evidence" value="ECO:0007669"/>
    <property type="project" value="InterPro"/>
</dbReference>
<dbReference type="FunFam" id="3.50.50.60:FF:000138">
    <property type="entry name" value="Flavin-containing monooxygenase"/>
    <property type="match status" value="1"/>
</dbReference>
<dbReference type="Gene3D" id="3.50.50.60">
    <property type="entry name" value="FAD/NAD(P)-binding domain"/>
    <property type="match status" value="2"/>
</dbReference>
<dbReference type="InterPro" id="IPR036188">
    <property type="entry name" value="FAD/NAD-bd_sf"/>
</dbReference>
<dbReference type="InterPro" id="IPR000960">
    <property type="entry name" value="Flavin_mOase"/>
</dbReference>
<dbReference type="InterPro" id="IPR020946">
    <property type="entry name" value="Flavin_mOase-like"/>
</dbReference>
<dbReference type="InterPro" id="IPR050346">
    <property type="entry name" value="FMO-like"/>
</dbReference>
<dbReference type="PANTHER" id="PTHR23023">
    <property type="entry name" value="DIMETHYLANILINE MONOOXYGENASE"/>
    <property type="match status" value="1"/>
</dbReference>
<dbReference type="Pfam" id="PF00743">
    <property type="entry name" value="FMO-like"/>
    <property type="match status" value="2"/>
</dbReference>
<dbReference type="PIRSF" id="PIRSF000332">
    <property type="entry name" value="FMO"/>
    <property type="match status" value="1"/>
</dbReference>
<dbReference type="SUPFAM" id="SSF51905">
    <property type="entry name" value="FAD/NAD(P)-binding domain"/>
    <property type="match status" value="2"/>
</dbReference>
<comment type="function">
    <text evidence="1">Catalyzes the oxidation of trimethylamine (TMA) to produce trimethylamine N-oxide (TMAO) (PubMed:33771875). The produced TMAO is accumulated in the cell, functioning as a piezolyte, improving both growth and survival at high hydrostatic pressure (HHP) (PubMed:33771875).</text>
</comment>
<comment type="catalytic activity">
    <reaction evidence="1">
        <text>trimethylamine + NADPH + O2 = trimethylamine N-oxide + NADP(+) + H2O</text>
        <dbReference type="Rhea" id="RHEA:31979"/>
        <dbReference type="ChEBI" id="CHEBI:15377"/>
        <dbReference type="ChEBI" id="CHEBI:15379"/>
        <dbReference type="ChEBI" id="CHEBI:15724"/>
        <dbReference type="ChEBI" id="CHEBI:57783"/>
        <dbReference type="ChEBI" id="CHEBI:58349"/>
        <dbReference type="ChEBI" id="CHEBI:58389"/>
        <dbReference type="EC" id="1.14.13.148"/>
    </reaction>
</comment>
<comment type="cofactor">
    <cofactor evidence="1">
        <name>FAD</name>
        <dbReference type="ChEBI" id="CHEBI:57692"/>
    </cofactor>
</comment>
<comment type="biophysicochemical properties">
    <temperatureDependence>
        <text evidence="1">Optimum temperature is 25 degrees Celsius. Retains 20 to 40% of the maximum activity at 0 to 5 degrees Celsius.</text>
    </temperatureDependence>
</comment>
<comment type="induction">
    <text evidence="1">Expression is induced by TMA and HHP stress.</text>
</comment>
<comment type="similarity">
    <text evidence="3">Belongs to the FMO family.</text>
</comment>
<evidence type="ECO:0000269" key="1">
    <source>
    </source>
</evidence>
<evidence type="ECO:0000303" key="2">
    <source>
    </source>
</evidence>
<evidence type="ECO:0000305" key="3"/>
<evidence type="ECO:0000312" key="4">
    <source>
        <dbReference type="EMBL" id="AJH16415.1"/>
    </source>
</evidence>
<evidence type="ECO:0007744" key="5">
    <source>
        <dbReference type="PDB" id="6KBW"/>
    </source>
</evidence>
<evidence type="ECO:0007829" key="6">
    <source>
        <dbReference type="PDB" id="6KBW"/>
    </source>
</evidence>